<reference key="1">
    <citation type="journal article" date="1998" name="J. Cell Biol.">
        <title>Kar9p is a novel cortical protein required for cytoplasmic microtubule orientation in yeast.</title>
        <authorList>
            <person name="Miller R.K."/>
            <person name="Rose M.D."/>
        </authorList>
    </citation>
    <scope>NUCLEOTIDE SEQUENCE [GENOMIC DNA]</scope>
    <source>
        <strain>ATCC 204508 / S288c</strain>
    </source>
</reference>
<reference key="2">
    <citation type="journal article" date="1997" name="Nature">
        <title>The nucleotide sequence of Saccharomyces cerevisiae chromosome XVI.</title>
        <authorList>
            <person name="Bussey H."/>
            <person name="Storms R.K."/>
            <person name="Ahmed A."/>
            <person name="Albermann K."/>
            <person name="Allen E."/>
            <person name="Ansorge W."/>
            <person name="Araujo R."/>
            <person name="Aparicio A."/>
            <person name="Barrell B.G."/>
            <person name="Badcock K."/>
            <person name="Benes V."/>
            <person name="Botstein D."/>
            <person name="Bowman S."/>
            <person name="Brueckner M."/>
            <person name="Carpenter J."/>
            <person name="Cherry J.M."/>
            <person name="Chung E."/>
            <person name="Churcher C.M."/>
            <person name="Coster F."/>
            <person name="Davis K."/>
            <person name="Davis R.W."/>
            <person name="Dietrich F.S."/>
            <person name="Delius H."/>
            <person name="DiPaolo T."/>
            <person name="Dubois E."/>
            <person name="Duesterhoeft A."/>
            <person name="Duncan M."/>
            <person name="Floeth M."/>
            <person name="Fortin N."/>
            <person name="Friesen J.D."/>
            <person name="Fritz C."/>
            <person name="Goffeau A."/>
            <person name="Hall J."/>
            <person name="Hebling U."/>
            <person name="Heumann K."/>
            <person name="Hilbert H."/>
            <person name="Hillier L.W."/>
            <person name="Hunicke-Smith S."/>
            <person name="Hyman R.W."/>
            <person name="Johnston M."/>
            <person name="Kalman S."/>
            <person name="Kleine K."/>
            <person name="Komp C."/>
            <person name="Kurdi O."/>
            <person name="Lashkari D."/>
            <person name="Lew H."/>
            <person name="Lin A."/>
            <person name="Lin D."/>
            <person name="Louis E.J."/>
            <person name="Marathe R."/>
            <person name="Messenguy F."/>
            <person name="Mewes H.-W."/>
            <person name="Mirtipati S."/>
            <person name="Moestl D."/>
            <person name="Mueller-Auer S."/>
            <person name="Namath A."/>
            <person name="Nentwich U."/>
            <person name="Oefner P."/>
            <person name="Pearson D."/>
            <person name="Petel F.X."/>
            <person name="Pohl T.M."/>
            <person name="Purnelle B."/>
            <person name="Rajandream M.A."/>
            <person name="Rechmann S."/>
            <person name="Rieger M."/>
            <person name="Riles L."/>
            <person name="Roberts D."/>
            <person name="Schaefer M."/>
            <person name="Scharfe M."/>
            <person name="Scherens B."/>
            <person name="Schramm S."/>
            <person name="Schroeder M."/>
            <person name="Sdicu A.-M."/>
            <person name="Tettelin H."/>
            <person name="Urrestarazu L.A."/>
            <person name="Ushinsky S."/>
            <person name="Vierendeels F."/>
            <person name="Vissers S."/>
            <person name="Voss H."/>
            <person name="Walsh S.V."/>
            <person name="Wambutt R."/>
            <person name="Wang Y."/>
            <person name="Wedler E."/>
            <person name="Wedler H."/>
            <person name="Winnett E."/>
            <person name="Zhong W.-W."/>
            <person name="Zollner A."/>
            <person name="Vo D.H."/>
            <person name="Hani J."/>
        </authorList>
    </citation>
    <scope>NUCLEOTIDE SEQUENCE [LARGE SCALE GENOMIC DNA]</scope>
    <source>
        <strain>ATCC 204508 / S288c</strain>
    </source>
</reference>
<reference key="3">
    <citation type="journal article" date="2014" name="G3 (Bethesda)">
        <title>The reference genome sequence of Saccharomyces cerevisiae: Then and now.</title>
        <authorList>
            <person name="Engel S.R."/>
            <person name="Dietrich F.S."/>
            <person name="Fisk D.G."/>
            <person name="Binkley G."/>
            <person name="Balakrishnan R."/>
            <person name="Costanzo M.C."/>
            <person name="Dwight S.S."/>
            <person name="Hitz B.C."/>
            <person name="Karra K."/>
            <person name="Nash R.S."/>
            <person name="Weng S."/>
            <person name="Wong E.D."/>
            <person name="Lloyd P."/>
            <person name="Skrzypek M.S."/>
            <person name="Miyasato S.R."/>
            <person name="Simison M."/>
            <person name="Cherry J.M."/>
        </authorList>
    </citation>
    <scope>GENOME REANNOTATION</scope>
    <source>
        <strain>ATCC 204508 / S288c</strain>
    </source>
</reference>
<reference key="4">
    <citation type="journal article" date="2007" name="Genome Res.">
        <title>Approaching a complete repository of sequence-verified protein-encoding clones for Saccharomyces cerevisiae.</title>
        <authorList>
            <person name="Hu Y."/>
            <person name="Rolfs A."/>
            <person name="Bhullar B."/>
            <person name="Murthy T.V.S."/>
            <person name="Zhu C."/>
            <person name="Berger M.F."/>
            <person name="Camargo A.A."/>
            <person name="Kelley F."/>
            <person name="McCarron S."/>
            <person name="Jepson D."/>
            <person name="Richardson A."/>
            <person name="Raphael J."/>
            <person name="Moreira D."/>
            <person name="Taycher E."/>
            <person name="Zuo D."/>
            <person name="Mohr S."/>
            <person name="Kane M.F."/>
            <person name="Williamson J."/>
            <person name="Simpson A.J.G."/>
            <person name="Bulyk M.L."/>
            <person name="Harlow E."/>
            <person name="Marsischky G."/>
            <person name="Kolodner R.D."/>
            <person name="LaBaer J."/>
        </authorList>
    </citation>
    <scope>NUCLEOTIDE SEQUENCE [GENOMIC DNA]</scope>
    <source>
        <strain>ATCC 204508 / S288c</strain>
    </source>
</reference>
<reference key="5">
    <citation type="journal article" date="1993" name="Mol. Cell. Biol.">
        <title>Genetic and biochemical characterization of a phosphatidylinositol-specific phospholipase C in Saccharomyces cerevisiae.</title>
        <authorList>
            <person name="Flick J.S."/>
            <person name="Thorner J.W."/>
        </authorList>
    </citation>
    <scope>NUCLEOTIDE SEQUENCE [GENOMIC DNA] OF 343-644</scope>
</reference>
<reference key="6">
    <citation type="journal article" date="2003" name="Nature">
        <title>Global analysis of protein expression in yeast.</title>
        <authorList>
            <person name="Ghaemmaghami S."/>
            <person name="Huh W.-K."/>
            <person name="Bower K."/>
            <person name="Howson R.W."/>
            <person name="Belle A."/>
            <person name="Dephoure N."/>
            <person name="O'Shea E.K."/>
            <person name="Weissman J.S."/>
        </authorList>
    </citation>
    <scope>LEVEL OF PROTEIN EXPRESSION [LARGE SCALE ANALYSIS]</scope>
</reference>
<reference key="7">
    <citation type="journal article" date="2008" name="Mol. Cell. Proteomics">
        <title>A multidimensional chromatography technology for in-depth phosphoproteome analysis.</title>
        <authorList>
            <person name="Albuquerque C.P."/>
            <person name="Smolka M.B."/>
            <person name="Payne S.H."/>
            <person name="Bafna V."/>
            <person name="Eng J."/>
            <person name="Zhou H."/>
        </authorList>
    </citation>
    <scope>IDENTIFICATION BY MASS SPECTROMETRY [LARGE SCALE ANALYSIS]</scope>
</reference>
<reference key="8">
    <citation type="journal article" date="2009" name="Science">
        <title>Global analysis of Cdk1 substrate phosphorylation sites provides insights into evolution.</title>
        <authorList>
            <person name="Holt L.J."/>
            <person name="Tuch B.B."/>
            <person name="Villen J."/>
            <person name="Johnson A.D."/>
            <person name="Gygi S.P."/>
            <person name="Morgan D.O."/>
        </authorList>
    </citation>
    <scope>PHOSPHORYLATION [LARGE SCALE ANALYSIS] AT SER-496</scope>
    <scope>IDENTIFICATION BY MASS SPECTROMETRY [LARGE SCALE ANALYSIS]</scope>
</reference>
<sequence>MDNDGPRSMTIGDDFQENFCERLERIHNTLHSINDCNSLNESTTSISETLLVQFYDDLENVASVIPDLVNKKRLGKDDILLFMDWLLLKKYMLYQFISDVHNIEEGFAHLLDLLEDEFSKDDQDSDKYNRFSPMFDVIEESTQIKTQLEPWLTNLKELLDTSLEFNEISKDHMDTLHKIINSNISYCLEIQEERFASPIRHTPSFTLEQLVKLLGTHTETTEPKVPKFSPAEDILSRKFLNLKKNIPPIEKSLTDILPQRIVQFGHRNITNITTLQTILQKKYELIMKDYRFMNSEFRELKVELIDKRWNILFINLNHELLYILDEIERLQSKLLTTKYTKDITIRLERQLERKSKTVSKTFNIIYRALEFSLLDAGVASKTNELAQRWLNIKPTADKILIKSSASNKIATSKKKIPKPKSLGFGRPNSVIGTITQDFQERVAINEGDSNKTPENSTTVALKGKKLGKALLQKMNIKPATSPNSSNAINPFFDPESPNKGKLILSSVPPLPYDETDETTLRVSRGENEKSPDSFITSRHENKVQITETPLMAKNKSVLDIEKDKWNHYRSLPSRIPIYKDKVVKVTVENTPIAKVFQTPPTKITTPNSQVWVPSTRRRTRLRPPTPLSQLLSPREGRLDKTPTY</sequence>
<proteinExistence type="evidence at protein level"/>
<dbReference type="EMBL" id="AF034763">
    <property type="protein sequence ID" value="AAB96652.1"/>
    <property type="molecule type" value="Genomic_DNA"/>
</dbReference>
<dbReference type="EMBL" id="Z73625">
    <property type="protein sequence ID" value="CAA98005.1"/>
    <property type="molecule type" value="Genomic_DNA"/>
</dbReference>
<dbReference type="EMBL" id="AY693206">
    <property type="protein sequence ID" value="AAT93225.1"/>
    <property type="molecule type" value="Genomic_DNA"/>
</dbReference>
<dbReference type="EMBL" id="L13036">
    <property type="protein sequence ID" value="AAA99926.1"/>
    <property type="molecule type" value="Genomic_DNA"/>
</dbReference>
<dbReference type="EMBL" id="BK006949">
    <property type="protein sequence ID" value="DAA11167.1"/>
    <property type="molecule type" value="Genomic_DNA"/>
</dbReference>
<dbReference type="PIR" id="S65302">
    <property type="entry name" value="S65302"/>
</dbReference>
<dbReference type="RefSeq" id="NP_015054.1">
    <property type="nucleotide sequence ID" value="NM_001184083.1"/>
</dbReference>
<dbReference type="PDB" id="5N74">
    <property type="method" value="X-ray"/>
    <property type="resolution" value="2.30 A"/>
    <property type="chains" value="I/J/K/L/M/N/O/P=614-633"/>
</dbReference>
<dbReference type="PDBsum" id="5N74"/>
<dbReference type="SMR" id="P32526"/>
<dbReference type="BioGRID" id="35944">
    <property type="interactions" value="184"/>
</dbReference>
<dbReference type="DIP" id="DIP-2712N"/>
<dbReference type="FunCoup" id="P32526">
    <property type="interactions" value="69"/>
</dbReference>
<dbReference type="IntAct" id="P32526">
    <property type="interactions" value="10"/>
</dbReference>
<dbReference type="MINT" id="P32526"/>
<dbReference type="STRING" id="4932.YPL269W"/>
<dbReference type="iPTMnet" id="P32526"/>
<dbReference type="PaxDb" id="4932-YPL269W"/>
<dbReference type="PeptideAtlas" id="P32526"/>
<dbReference type="EnsemblFungi" id="YPL269W_mRNA">
    <property type="protein sequence ID" value="YPL269W"/>
    <property type="gene ID" value="YPL269W"/>
</dbReference>
<dbReference type="GeneID" id="855859"/>
<dbReference type="KEGG" id="sce:YPL269W"/>
<dbReference type="AGR" id="SGD:S000006190"/>
<dbReference type="SGD" id="S000006190">
    <property type="gene designation" value="KAR9"/>
</dbReference>
<dbReference type="VEuPathDB" id="FungiDB:YPL269W"/>
<dbReference type="eggNOG" id="ENOG502QRQ1">
    <property type="taxonomic scope" value="Eukaryota"/>
</dbReference>
<dbReference type="HOGENOM" id="CLU_016705_0_0_1"/>
<dbReference type="InParanoid" id="P32526"/>
<dbReference type="OMA" id="ENCTHES"/>
<dbReference type="OrthoDB" id="5559380at2759"/>
<dbReference type="BioCyc" id="YEAST:G3O-34151-MONOMER"/>
<dbReference type="BioGRID-ORCS" id="855859">
    <property type="hits" value="1 hit in 10 CRISPR screens"/>
</dbReference>
<dbReference type="CD-CODE" id="876000F7">
    <property type="entry name" value="Centrosome"/>
</dbReference>
<dbReference type="CD-CODE" id="F813C9D9">
    <property type="entry name" value="TIP body"/>
</dbReference>
<dbReference type="PRO" id="PR:P32526"/>
<dbReference type="Proteomes" id="UP000002311">
    <property type="component" value="Chromosome XVI"/>
</dbReference>
<dbReference type="RNAct" id="P32526">
    <property type="molecule type" value="protein"/>
</dbReference>
<dbReference type="GO" id="GO:0005938">
    <property type="term" value="C:cell cortex"/>
    <property type="evidence" value="ECO:0000314"/>
    <property type="project" value="SGD"/>
</dbReference>
<dbReference type="GO" id="GO:0005737">
    <property type="term" value="C:cytoplasm"/>
    <property type="evidence" value="ECO:0000314"/>
    <property type="project" value="SGD"/>
</dbReference>
<dbReference type="GO" id="GO:0005881">
    <property type="term" value="C:cytoplasmic microtubule"/>
    <property type="evidence" value="ECO:0000314"/>
    <property type="project" value="SGD"/>
</dbReference>
<dbReference type="GO" id="GO:0000776">
    <property type="term" value="C:kinetochore"/>
    <property type="evidence" value="ECO:0000314"/>
    <property type="project" value="SGD"/>
</dbReference>
<dbReference type="GO" id="GO:0043332">
    <property type="term" value="C:mating projection tip"/>
    <property type="evidence" value="ECO:0000314"/>
    <property type="project" value="SGD"/>
</dbReference>
<dbReference type="GO" id="GO:0005634">
    <property type="term" value="C:nucleus"/>
    <property type="evidence" value="ECO:0000314"/>
    <property type="project" value="SGD"/>
</dbReference>
<dbReference type="GO" id="GO:0005816">
    <property type="term" value="C:spindle pole body"/>
    <property type="evidence" value="ECO:0000314"/>
    <property type="project" value="SGD"/>
</dbReference>
<dbReference type="GO" id="GO:0051293">
    <property type="term" value="P:establishment of spindle localization"/>
    <property type="evidence" value="ECO:0000315"/>
    <property type="project" value="SGD"/>
</dbReference>
<dbReference type="GO" id="GO:0000741">
    <property type="term" value="P:karyogamy"/>
    <property type="evidence" value="ECO:0007669"/>
    <property type="project" value="UniProtKB-KW"/>
</dbReference>
<dbReference type="GO" id="GO:0031578">
    <property type="term" value="P:mitotic spindle orientation checkpoint signaling"/>
    <property type="evidence" value="ECO:0000316"/>
    <property type="project" value="SGD"/>
</dbReference>
<dbReference type="GO" id="GO:0030473">
    <property type="term" value="P:nuclear migration along microtubule"/>
    <property type="evidence" value="ECO:0000315"/>
    <property type="project" value="SGD"/>
</dbReference>
<dbReference type="InterPro" id="IPR013889">
    <property type="entry name" value="Karyogamy_KAR9"/>
</dbReference>
<dbReference type="PANTHER" id="PTHR37271">
    <property type="entry name" value="KARYOGAMY PROTEIN KAR9"/>
    <property type="match status" value="1"/>
</dbReference>
<dbReference type="PANTHER" id="PTHR37271:SF1">
    <property type="entry name" value="KARYOGAMY PROTEIN KAR9"/>
    <property type="match status" value="1"/>
</dbReference>
<dbReference type="Pfam" id="PF08580">
    <property type="entry name" value="KAR9"/>
    <property type="match status" value="1"/>
</dbReference>
<organism>
    <name type="scientific">Saccharomyces cerevisiae (strain ATCC 204508 / S288c)</name>
    <name type="common">Baker's yeast</name>
    <dbReference type="NCBI Taxonomy" id="559292"/>
    <lineage>
        <taxon>Eukaryota</taxon>
        <taxon>Fungi</taxon>
        <taxon>Dikarya</taxon>
        <taxon>Ascomycota</taxon>
        <taxon>Saccharomycotina</taxon>
        <taxon>Saccharomycetes</taxon>
        <taxon>Saccharomycetales</taxon>
        <taxon>Saccharomycetaceae</taxon>
        <taxon>Saccharomyces</taxon>
    </lineage>
</organism>
<accession>P32526</accession>
<accession>D6W3A1</accession>
<accession>Q08982</accession>
<comment type="function">
    <text>Involved in karyogamy. Component of a cortical adaptor complex that orients cytoplasmic microtubules. It may be involved in anchoring cytoplasmic microtubules to the cell cortex.</text>
</comment>
<comment type="interaction">
    <interactant intactId="EBI-9516">
        <id>P32526</id>
    </interactant>
    <interactant intactId="EBI-11659">
        <id>P19524</id>
        <label>MYO2</label>
    </interactant>
    <organismsDiffer>false</organismsDiffer>
    <experiments>2</experiments>
</comment>
<comment type="subcellular location">
    <subcellularLocation>
        <location>Nucleus</location>
    </subcellularLocation>
    <subcellularLocation>
        <location>Cytoplasm</location>
        <location>Cytoskeleton</location>
    </subcellularLocation>
    <text>Localizes to the tip of shmoo projections and to the tip of budding cells in a cell-cycle dependent manner.</text>
</comment>
<comment type="miscellaneous">
    <text evidence="2">Present with 656 molecules/cell in log phase SD medium.</text>
</comment>
<name>KAR9_YEAST</name>
<feature type="chain" id="PRO_0000084296" description="Karyogamy protein KAR9">
    <location>
        <begin position="1"/>
        <end position="644"/>
    </location>
</feature>
<feature type="region of interest" description="Disordered" evidence="1">
    <location>
        <begin position="506"/>
        <end position="534"/>
    </location>
</feature>
<feature type="region of interest" description="Disordered" evidence="1">
    <location>
        <begin position="606"/>
        <end position="644"/>
    </location>
</feature>
<feature type="compositionally biased region" description="Basic and acidic residues" evidence="1">
    <location>
        <begin position="523"/>
        <end position="534"/>
    </location>
</feature>
<feature type="compositionally biased region" description="Basic and acidic residues" evidence="1">
    <location>
        <begin position="634"/>
        <end position="644"/>
    </location>
</feature>
<feature type="modified residue" description="Phosphoserine" evidence="4">
    <location>
        <position position="496"/>
    </location>
</feature>
<feature type="sequence conflict" description="In Ref. 5; AAA99926." evidence="3" ref="5">
    <original>T</original>
    <variation>A</variation>
    <location>
        <position position="641"/>
    </location>
</feature>
<feature type="turn" evidence="5">
    <location>
        <begin position="628"/>
        <end position="630"/>
    </location>
</feature>
<evidence type="ECO:0000256" key="1">
    <source>
        <dbReference type="SAM" id="MobiDB-lite"/>
    </source>
</evidence>
<evidence type="ECO:0000269" key="2">
    <source>
    </source>
</evidence>
<evidence type="ECO:0000305" key="3"/>
<evidence type="ECO:0007744" key="4">
    <source>
    </source>
</evidence>
<evidence type="ECO:0007829" key="5">
    <source>
        <dbReference type="PDB" id="5N74"/>
    </source>
</evidence>
<gene>
    <name type="primary">KAR9</name>
    <name type="ordered locus">YPL269W</name>
</gene>
<protein>
    <recommendedName>
        <fullName>Karyogamy protein KAR9</fullName>
    </recommendedName>
    <alternativeName>
        <fullName>Cortical protein KAR9</fullName>
    </alternativeName>
</protein>
<keyword id="KW-0002">3D-structure</keyword>
<keyword id="KW-0963">Cytoplasm</keyword>
<keyword id="KW-0206">Cytoskeleton</keyword>
<keyword id="KW-0415">Karyogamy</keyword>
<keyword id="KW-0493">Microtubule</keyword>
<keyword id="KW-0539">Nucleus</keyword>
<keyword id="KW-0597">Phosphoprotein</keyword>
<keyword id="KW-1185">Reference proteome</keyword>